<feature type="chain" id="PRO_0000396036" description="Probable F-box protein At2g29610">
    <location>
        <begin position="1"/>
        <end position="258"/>
    </location>
</feature>
<feature type="domain" description="F-box">
    <location>
        <begin position="28"/>
        <end position="74"/>
    </location>
</feature>
<feature type="region of interest" description="Disordered" evidence="1">
    <location>
        <begin position="1"/>
        <end position="25"/>
    </location>
</feature>
<feature type="compositionally biased region" description="Low complexity" evidence="1">
    <location>
        <begin position="8"/>
        <end position="20"/>
    </location>
</feature>
<feature type="splice variant" id="VSP_039571" description="In isoform 2." evidence="2">
    <location>
        <begin position="1"/>
        <end position="133"/>
    </location>
</feature>
<accession>O82394</accession>
<accession>Q1PEZ0</accession>
<comment type="alternative products">
    <event type="alternative splicing"/>
    <isoform>
        <id>O82394-1</id>
        <name>1</name>
        <sequence type="displayed"/>
    </isoform>
    <isoform>
        <id>O82394-2</id>
        <name>2</name>
        <sequence type="described" ref="VSP_039571"/>
    </isoform>
</comment>
<proteinExistence type="evidence at transcript level"/>
<evidence type="ECO:0000256" key="1">
    <source>
        <dbReference type="SAM" id="MobiDB-lite"/>
    </source>
</evidence>
<evidence type="ECO:0000303" key="2">
    <source>
    </source>
</evidence>
<organism>
    <name type="scientific">Arabidopsis thaliana</name>
    <name type="common">Mouse-ear cress</name>
    <dbReference type="NCBI Taxonomy" id="3702"/>
    <lineage>
        <taxon>Eukaryota</taxon>
        <taxon>Viridiplantae</taxon>
        <taxon>Streptophyta</taxon>
        <taxon>Embryophyta</taxon>
        <taxon>Tracheophyta</taxon>
        <taxon>Spermatophyta</taxon>
        <taxon>Magnoliopsida</taxon>
        <taxon>eudicotyledons</taxon>
        <taxon>Gunneridae</taxon>
        <taxon>Pentapetalae</taxon>
        <taxon>rosids</taxon>
        <taxon>malvids</taxon>
        <taxon>Brassicales</taxon>
        <taxon>Brassicaceae</taxon>
        <taxon>Camelineae</taxon>
        <taxon>Arabidopsis</taxon>
    </lineage>
</organism>
<name>FB321_ARATH</name>
<reference key="1">
    <citation type="journal article" date="1999" name="Nature">
        <title>Sequence and analysis of chromosome 2 of the plant Arabidopsis thaliana.</title>
        <authorList>
            <person name="Lin X."/>
            <person name="Kaul S."/>
            <person name="Rounsley S.D."/>
            <person name="Shea T.P."/>
            <person name="Benito M.-I."/>
            <person name="Town C.D."/>
            <person name="Fujii C.Y."/>
            <person name="Mason T.M."/>
            <person name="Bowman C.L."/>
            <person name="Barnstead M.E."/>
            <person name="Feldblyum T.V."/>
            <person name="Buell C.R."/>
            <person name="Ketchum K.A."/>
            <person name="Lee J.J."/>
            <person name="Ronning C.M."/>
            <person name="Koo H.L."/>
            <person name="Moffat K.S."/>
            <person name="Cronin L.A."/>
            <person name="Shen M."/>
            <person name="Pai G."/>
            <person name="Van Aken S."/>
            <person name="Umayam L."/>
            <person name="Tallon L.J."/>
            <person name="Gill J.E."/>
            <person name="Adams M.D."/>
            <person name="Carrera A.J."/>
            <person name="Creasy T.H."/>
            <person name="Goodman H.M."/>
            <person name="Somerville C.R."/>
            <person name="Copenhaver G.P."/>
            <person name="Preuss D."/>
            <person name="Nierman W.C."/>
            <person name="White O."/>
            <person name="Eisen J.A."/>
            <person name="Salzberg S.L."/>
            <person name="Fraser C.M."/>
            <person name="Venter J.C."/>
        </authorList>
    </citation>
    <scope>NUCLEOTIDE SEQUENCE [LARGE SCALE GENOMIC DNA]</scope>
    <source>
        <strain>cv. Columbia</strain>
    </source>
</reference>
<reference key="2">
    <citation type="journal article" date="2017" name="Plant J.">
        <title>Araport11: a complete reannotation of the Arabidopsis thaliana reference genome.</title>
        <authorList>
            <person name="Cheng C.Y."/>
            <person name="Krishnakumar V."/>
            <person name="Chan A.P."/>
            <person name="Thibaud-Nissen F."/>
            <person name="Schobel S."/>
            <person name="Town C.D."/>
        </authorList>
    </citation>
    <scope>GENOME REANNOTATION</scope>
    <source>
        <strain>cv. Columbia</strain>
    </source>
</reference>
<reference key="3">
    <citation type="journal article" date="2006" name="Plant Biotechnol. J.">
        <title>Simultaneous high-throughput recombinational cloning of open reading frames in closed and open configurations.</title>
        <authorList>
            <person name="Underwood B.A."/>
            <person name="Vanderhaeghen R."/>
            <person name="Whitford R."/>
            <person name="Town C.D."/>
            <person name="Hilson P."/>
        </authorList>
    </citation>
    <scope>NUCLEOTIDE SEQUENCE [LARGE SCALE MRNA] (ISOFORM 2)</scope>
    <source>
        <strain>cv. Columbia</strain>
    </source>
</reference>
<keyword id="KW-0025">Alternative splicing</keyword>
<keyword id="KW-1185">Reference proteome</keyword>
<sequence>MVELSEIPGDPNGADPNNNPQEEDEENLPILLQLPEELIERIIAHFPQCYSPSPILVCETFRQVINSDHFYYVTRSLLSFTKPVLYALIAFQAYTRPSWFFLRQSNIALQLHRIRSYEPVQGLWESWGEESELMRFWHSVSSCVVGDLLYALDLTCALEHPIVVYYPNEFVWRPVMGVDTAHLPILCEYRSTLANFDGKLVILGGGDCSESSSEIWCVEIALETRQGDQIWGVVKSVSIVSRDLPMRHVIELCRTVMV</sequence>
<protein>
    <recommendedName>
        <fullName>Probable F-box protein At2g29610</fullName>
    </recommendedName>
</protein>
<dbReference type="EMBL" id="AC005496">
    <property type="protein sequence ID" value="AAC35234.1"/>
    <property type="molecule type" value="Genomic_DNA"/>
</dbReference>
<dbReference type="EMBL" id="CP002685">
    <property type="status" value="NOT_ANNOTATED_CDS"/>
    <property type="molecule type" value="Genomic_DNA"/>
</dbReference>
<dbReference type="EMBL" id="DQ446577">
    <property type="protein sequence ID" value="ABE65871.1"/>
    <property type="molecule type" value="mRNA"/>
</dbReference>
<dbReference type="PIR" id="D84698">
    <property type="entry name" value="D84698"/>
</dbReference>
<dbReference type="SMR" id="O82394"/>
<dbReference type="GlyGen" id="O82394">
    <property type="glycosylation" value="1 site"/>
</dbReference>
<dbReference type="Araport" id="AT2G29610"/>
<dbReference type="TAIR" id="AT2G29610"/>
<dbReference type="InParanoid" id="O82394"/>
<dbReference type="PRO" id="PR:O82394"/>
<dbReference type="Proteomes" id="UP000006548">
    <property type="component" value="Chromosome 2"/>
</dbReference>
<dbReference type="ExpressionAtlas" id="O82394">
    <property type="expression patterns" value="baseline and differential"/>
</dbReference>
<dbReference type="InterPro" id="IPR036047">
    <property type="entry name" value="F-box-like_dom_sf"/>
</dbReference>
<dbReference type="InterPro" id="IPR050354">
    <property type="entry name" value="F-box/kelch-repeat_ARATH"/>
</dbReference>
<dbReference type="InterPro" id="IPR001810">
    <property type="entry name" value="F-box_dom"/>
</dbReference>
<dbReference type="InterPro" id="IPR015915">
    <property type="entry name" value="Kelch-typ_b-propeller"/>
</dbReference>
<dbReference type="PANTHER" id="PTHR24414:SF65">
    <property type="entry name" value="F-BOX DOMAIN-CONTAINING PROTEIN"/>
    <property type="match status" value="1"/>
</dbReference>
<dbReference type="PANTHER" id="PTHR24414">
    <property type="entry name" value="F-BOX/KELCH-REPEAT PROTEIN SKIP4"/>
    <property type="match status" value="1"/>
</dbReference>
<dbReference type="Pfam" id="PF00646">
    <property type="entry name" value="F-box"/>
    <property type="match status" value="1"/>
</dbReference>
<dbReference type="Pfam" id="PF25210">
    <property type="entry name" value="Kelch_FKB95"/>
    <property type="match status" value="1"/>
</dbReference>
<dbReference type="SUPFAM" id="SSF81383">
    <property type="entry name" value="F-box domain"/>
    <property type="match status" value="1"/>
</dbReference>
<dbReference type="SUPFAM" id="SSF117281">
    <property type="entry name" value="Kelch motif"/>
    <property type="match status" value="1"/>
</dbReference>
<gene>
    <name type="ordered locus">At2g29610</name>
    <name type="ORF">T27A16.2</name>
</gene>